<reference key="1">
    <citation type="journal article" date="1995" name="J. Biol. Chem.">
        <title>Peripheral nervous system-specific genes identified by subtractive cDNA cloning.</title>
        <authorList>
            <person name="Akopian A.N."/>
            <person name="Wood N."/>
        </authorList>
    </citation>
    <scope>NUCLEOTIDE SEQUENCE [MRNA]</scope>
    <source>
        <strain>Sprague-Dawley</strain>
        <tissue>Spinal ganglion</tissue>
    </source>
</reference>
<reference key="2">
    <citation type="journal article" date="2012" name="Nat. Commun.">
        <title>Quantitative maps of protein phosphorylation sites across 14 different rat organs and tissues.</title>
        <authorList>
            <person name="Lundby A."/>
            <person name="Secher A."/>
            <person name="Lage K."/>
            <person name="Nordsborg N.B."/>
            <person name="Dmytriyev A."/>
            <person name="Lundby C."/>
            <person name="Olsen J.V."/>
        </authorList>
    </citation>
    <scope>PHOSPHORYLATION [LARGE SCALE ANALYSIS] AT THR-28; SER-233; THR-420 AND TYR-445</scope>
    <scope>IDENTIFICATION BY MASS SPECTROMETRY [LARGE SCALE ANALYSIS]</scope>
</reference>
<protein>
    <recommendedName>
        <fullName>Myosin-binding protein C, slow-type</fullName>
        <shortName>Slow MyBP-C</shortName>
    </recommendedName>
    <alternativeName>
        <fullName>C-protein, skeletal muscle slow isoform</fullName>
    </alternativeName>
</protein>
<proteinExistence type="evidence at protein level"/>
<gene>
    <name type="primary">Mybpc1</name>
</gene>
<organism>
    <name type="scientific">Rattus norvegicus</name>
    <name type="common">Rat</name>
    <dbReference type="NCBI Taxonomy" id="10116"/>
    <lineage>
        <taxon>Eukaryota</taxon>
        <taxon>Metazoa</taxon>
        <taxon>Chordata</taxon>
        <taxon>Craniata</taxon>
        <taxon>Vertebrata</taxon>
        <taxon>Euteleostomi</taxon>
        <taxon>Mammalia</taxon>
        <taxon>Eutheria</taxon>
        <taxon>Euarchontoglires</taxon>
        <taxon>Glires</taxon>
        <taxon>Rodentia</taxon>
        <taxon>Myomorpha</taxon>
        <taxon>Muroidea</taxon>
        <taxon>Muridae</taxon>
        <taxon>Murinae</taxon>
        <taxon>Rattus</taxon>
    </lineage>
</organism>
<accession>Q63518</accession>
<dbReference type="EMBL" id="X90475">
    <property type="protein sequence ID" value="CAA62085.1"/>
    <property type="molecule type" value="mRNA"/>
</dbReference>
<dbReference type="PIR" id="B57431">
    <property type="entry name" value="B57431"/>
</dbReference>
<dbReference type="RefSeq" id="NP_001094228.2">
    <property type="nucleotide sequence ID" value="NM_001100758.2"/>
</dbReference>
<dbReference type="SMR" id="Q63518"/>
<dbReference type="FunCoup" id="Q63518">
    <property type="interactions" value="88"/>
</dbReference>
<dbReference type="IntAct" id="Q63518">
    <property type="interactions" value="1"/>
</dbReference>
<dbReference type="STRING" id="10116.ENSRNOP00000074295"/>
<dbReference type="iPTMnet" id="Q63518"/>
<dbReference type="PhosphoSitePlus" id="Q63518"/>
<dbReference type="PaxDb" id="10116-ENSRNOP00000035289"/>
<dbReference type="GeneID" id="362867"/>
<dbReference type="KEGG" id="rno:362867"/>
<dbReference type="UCSC" id="RGD:735102">
    <property type="organism name" value="rat"/>
</dbReference>
<dbReference type="AGR" id="RGD:735102"/>
<dbReference type="CTD" id="4604"/>
<dbReference type="RGD" id="735102">
    <property type="gene designation" value="Mybpc1"/>
</dbReference>
<dbReference type="eggNOG" id="ENOG502QPYI">
    <property type="taxonomic scope" value="Eukaryota"/>
</dbReference>
<dbReference type="InParanoid" id="Q63518"/>
<dbReference type="Proteomes" id="UP000002494">
    <property type="component" value="Unplaced"/>
</dbReference>
<dbReference type="GO" id="GO:0031430">
    <property type="term" value="C:M band"/>
    <property type="evidence" value="ECO:0000318"/>
    <property type="project" value="GO_Central"/>
</dbReference>
<dbReference type="GO" id="GO:0032982">
    <property type="term" value="C:myosin filament"/>
    <property type="evidence" value="ECO:0007669"/>
    <property type="project" value="UniProtKB-KW"/>
</dbReference>
<dbReference type="GO" id="GO:0003779">
    <property type="term" value="F:actin binding"/>
    <property type="evidence" value="ECO:0007669"/>
    <property type="project" value="UniProtKB-KW"/>
</dbReference>
<dbReference type="GO" id="GO:0017022">
    <property type="term" value="F:myosin binding"/>
    <property type="evidence" value="ECO:0000250"/>
    <property type="project" value="UniProtKB"/>
</dbReference>
<dbReference type="GO" id="GO:0048738">
    <property type="term" value="P:cardiac muscle tissue development"/>
    <property type="evidence" value="ECO:0000318"/>
    <property type="project" value="GO_Central"/>
</dbReference>
<dbReference type="GO" id="GO:0007155">
    <property type="term" value="P:cell adhesion"/>
    <property type="evidence" value="ECO:0007669"/>
    <property type="project" value="UniProtKB-KW"/>
</dbReference>
<dbReference type="GO" id="GO:0006936">
    <property type="term" value="P:muscle contraction"/>
    <property type="evidence" value="ECO:0000304"/>
    <property type="project" value="RGD"/>
</dbReference>
<dbReference type="GO" id="GO:0045214">
    <property type="term" value="P:sarcomere organization"/>
    <property type="evidence" value="ECO:0000318"/>
    <property type="project" value="GO_Central"/>
</dbReference>
<dbReference type="CDD" id="cd00063">
    <property type="entry name" value="FN3"/>
    <property type="match status" value="3"/>
</dbReference>
<dbReference type="CDD" id="cd05894">
    <property type="entry name" value="Ig_C5_MyBP-C"/>
    <property type="match status" value="1"/>
</dbReference>
<dbReference type="FunFam" id="2.60.40.10:FF:000286">
    <property type="entry name" value="Myosin binding protein C, slow type"/>
    <property type="match status" value="1"/>
</dbReference>
<dbReference type="FunFam" id="2.60.40.10:FF:000326">
    <property type="entry name" value="Myosin-binding protein C, cardiac-type"/>
    <property type="match status" value="1"/>
</dbReference>
<dbReference type="FunFam" id="2.60.40.10:FF:000031">
    <property type="entry name" value="Myosin-binding protein C, slow type"/>
    <property type="match status" value="1"/>
</dbReference>
<dbReference type="FunFam" id="2.60.40.10:FF:000062">
    <property type="entry name" value="Myosin-binding protein C, slow type"/>
    <property type="match status" value="1"/>
</dbReference>
<dbReference type="FunFam" id="2.60.40.10:FF:000249">
    <property type="entry name" value="myosin-binding protein C, slow-type isoform X4"/>
    <property type="match status" value="1"/>
</dbReference>
<dbReference type="Gene3D" id="2.60.40.10">
    <property type="entry name" value="Immunoglobulins"/>
    <property type="match status" value="7"/>
</dbReference>
<dbReference type="InterPro" id="IPR003961">
    <property type="entry name" value="FN3_dom"/>
</dbReference>
<dbReference type="InterPro" id="IPR036116">
    <property type="entry name" value="FN3_sf"/>
</dbReference>
<dbReference type="InterPro" id="IPR007110">
    <property type="entry name" value="Ig-like_dom"/>
</dbReference>
<dbReference type="InterPro" id="IPR036179">
    <property type="entry name" value="Ig-like_dom_sf"/>
</dbReference>
<dbReference type="InterPro" id="IPR013783">
    <property type="entry name" value="Ig-like_fold"/>
</dbReference>
<dbReference type="InterPro" id="IPR013098">
    <property type="entry name" value="Ig_I-set"/>
</dbReference>
<dbReference type="InterPro" id="IPR003599">
    <property type="entry name" value="Ig_sub"/>
</dbReference>
<dbReference type="InterPro" id="IPR050964">
    <property type="entry name" value="Striated_Muscle_Regulatory"/>
</dbReference>
<dbReference type="PANTHER" id="PTHR13817:SF27">
    <property type="entry name" value="MYOSIN-BINDING PROTEIN C, SLOW-TYPE"/>
    <property type="match status" value="1"/>
</dbReference>
<dbReference type="PANTHER" id="PTHR13817">
    <property type="entry name" value="TITIN"/>
    <property type="match status" value="1"/>
</dbReference>
<dbReference type="Pfam" id="PF00041">
    <property type="entry name" value="fn3"/>
    <property type="match status" value="3"/>
</dbReference>
<dbReference type="Pfam" id="PF07679">
    <property type="entry name" value="I-set"/>
    <property type="match status" value="3"/>
</dbReference>
<dbReference type="SMART" id="SM00060">
    <property type="entry name" value="FN3"/>
    <property type="match status" value="3"/>
</dbReference>
<dbReference type="SMART" id="SM00409">
    <property type="entry name" value="IG"/>
    <property type="match status" value="3"/>
</dbReference>
<dbReference type="SUPFAM" id="SSF49265">
    <property type="entry name" value="Fibronectin type III"/>
    <property type="match status" value="2"/>
</dbReference>
<dbReference type="SUPFAM" id="SSF48726">
    <property type="entry name" value="Immunoglobulin"/>
    <property type="match status" value="4"/>
</dbReference>
<dbReference type="PROSITE" id="PS50853">
    <property type="entry name" value="FN3"/>
    <property type="match status" value="3"/>
</dbReference>
<dbReference type="PROSITE" id="PS50835">
    <property type="entry name" value="IG_LIKE"/>
    <property type="match status" value="2"/>
</dbReference>
<feature type="chain" id="PRO_0000072690" description="Myosin-binding protein C, slow-type">
    <location>
        <begin position="1" status="less than"/>
        <end position="621" status="greater than"/>
    </location>
</feature>
<feature type="domain" description="Ig-like C2-type 1">
    <location>
        <begin position="1" status="less than"/>
        <end position="53"/>
    </location>
</feature>
<feature type="domain" description="Ig-like C2-type 2">
    <location>
        <begin position="54"/>
        <end position="142"/>
    </location>
</feature>
<feature type="domain" description="Ig-like C2-type 3">
    <location>
        <begin position="144"/>
        <end position="241"/>
    </location>
</feature>
<feature type="domain" description="Fibronectin type-III 1" evidence="3">
    <location>
        <begin position="244"/>
        <end position="343"/>
    </location>
</feature>
<feature type="domain" description="Fibronectin type-III 2" evidence="3">
    <location>
        <begin position="344"/>
        <end position="459"/>
    </location>
</feature>
<feature type="domain" description="Ig-like C2-type 4">
    <location>
        <begin position="459"/>
        <end position="553"/>
    </location>
</feature>
<feature type="domain" description="Fibronectin type-III 3" evidence="3">
    <location>
        <begin position="556"/>
        <end position="621"/>
    </location>
</feature>
<feature type="modified residue" description="Phosphothreonine" evidence="5">
    <location>
        <position position="28"/>
    </location>
</feature>
<feature type="modified residue" description="Phosphoserine" evidence="5">
    <location>
        <position position="233"/>
    </location>
</feature>
<feature type="modified residue" description="Phosphothreonine" evidence="5">
    <location>
        <position position="420"/>
    </location>
</feature>
<feature type="modified residue" description="Phosphotyrosine" evidence="5">
    <location>
        <position position="445"/>
    </location>
</feature>
<feature type="non-terminal residue">
    <location>
        <position position="1"/>
    </location>
</feature>
<feature type="non-terminal residue">
    <location>
        <position position="621"/>
    </location>
</feature>
<comment type="function">
    <text evidence="2">Thick filament-associated protein located in the crossbridge region of vertebrate striated muscle a bands. Slow skeletal protein that binds to both myosin and actin. In vitro, binds to native thin filaments and modifies the activity of actin-activated myosin ATPase. May modulate muscle contraction or may play a more structural role.</text>
</comment>
<comment type="subunit">
    <text evidence="1">Interacts with USP25 (isoform USP25m only); the interaction prevents proteasomal degradation of MYBPC1.</text>
</comment>
<comment type="similarity">
    <text evidence="4">Belongs to the immunoglobulin superfamily. MyBP family.</text>
</comment>
<evidence type="ECO:0000250" key="1"/>
<evidence type="ECO:0000250" key="2">
    <source>
        <dbReference type="UniProtKB" id="Q00872"/>
    </source>
</evidence>
<evidence type="ECO:0000255" key="3">
    <source>
        <dbReference type="PROSITE-ProRule" id="PRU00316"/>
    </source>
</evidence>
<evidence type="ECO:0000305" key="4"/>
<evidence type="ECO:0007744" key="5">
    <source>
    </source>
</evidence>
<name>MYPC1_RAT</name>
<keyword id="KW-0009">Actin-binding</keyword>
<keyword id="KW-0130">Cell adhesion</keyword>
<keyword id="KW-0393">Immunoglobulin domain</keyword>
<keyword id="KW-0514">Muscle protein</keyword>
<keyword id="KW-0597">Phosphoprotein</keyword>
<keyword id="KW-1185">Reference proteome</keyword>
<keyword id="KW-0677">Repeat</keyword>
<keyword id="KW-0787">Thick filament</keyword>
<sequence length="621" mass="68737">EEIVPGPKSRYRIKVEGKKHTLIIEGATKADSAEYSVMTTGGQSSAKLSVDLRPLKITTPLTDQTVKLGKEVCLKCEISENVPGKWTKNGLPVQEGERLKVVHKGRIHKLVIANALIEDEGEYVFTPDAITVPLVCQIHVIDPPKIILDGLEADNTVTVIAGSKLRLEIPVTGEPPPKAIWSRADKAIMEGSGRIRAESYPDSSTLVIDVAERDDSGVYNINLKNEAGEAHASIKLRLWISLILRLAPNVTEVGDDWCIMNWEPPVYDGGSPILGYFIERKKKQSSRWMRLNFDLCKETTFEPKKMIEGVAYEVRIFAVNAIGISKPSMPSKPFVPLAVTSPPTLLAVDSVTDSSVTMKWRPPDQIGAAGLSGYVLEYCFEGSTSAKQSNENGEAANDLPAEDWSLQTQTGSTRPKFTITGLPTDAKIFVRVKAINAAGASETKYYSQPILVKEIIEPPKIRIPRHLKQTYIRRVGEAVNLVIPFQGKPRPELTWKKDGAEIDKNQINIRNSETDTIIFIRKAERSHSGKYDLEVKVDKYVENASIDIQIVDRPGPPQAVTIEDVWGENVALTWTPPKDDGNAAITGYTIQKADKKSMEWFAVIEHYHRTNATITELVIGN</sequence>